<evidence type="ECO:0000250" key="1"/>
<evidence type="ECO:0000255" key="2">
    <source>
        <dbReference type="PROSITE-ProRule" id="PRU00434"/>
    </source>
</evidence>
<evidence type="ECO:0000305" key="3"/>
<sequence length="240" mass="26495">MEIQGLTIAYKQKVAIDNVTLQIASGKLTGIVGPNGAGKSTLLKGMMGLIPREQGQVTLADKPLTYWRKKIAYVPQRSEVDLTFPITVFDMVLLGTYPALGLIKRPGKKEKQLALDALEQVEMTGFMKRQIGELSGGQLQRVFIARALAQHAEIFFLDEPFAGIDMTSEALIMRLLKKLRDNGKTIVVVHHDFHKVAAYFDDIILLNKKLVAHGPVEQTFTEEKIQFAYGDAPVAFAAGV</sequence>
<reference key="1">
    <citation type="journal article" date="2001" name="Science">
        <title>Comparative genomics of Listeria species.</title>
        <authorList>
            <person name="Glaser P."/>
            <person name="Frangeul L."/>
            <person name="Buchrieser C."/>
            <person name="Rusniok C."/>
            <person name="Amend A."/>
            <person name="Baquero F."/>
            <person name="Berche P."/>
            <person name="Bloecker H."/>
            <person name="Brandt P."/>
            <person name="Chakraborty T."/>
            <person name="Charbit A."/>
            <person name="Chetouani F."/>
            <person name="Couve E."/>
            <person name="de Daruvar A."/>
            <person name="Dehoux P."/>
            <person name="Domann E."/>
            <person name="Dominguez-Bernal G."/>
            <person name="Duchaud E."/>
            <person name="Durant L."/>
            <person name="Dussurget O."/>
            <person name="Entian K.-D."/>
            <person name="Fsihi H."/>
            <person name="Garcia-del Portillo F."/>
            <person name="Garrido P."/>
            <person name="Gautier L."/>
            <person name="Goebel W."/>
            <person name="Gomez-Lopez N."/>
            <person name="Hain T."/>
            <person name="Hauf J."/>
            <person name="Jackson D."/>
            <person name="Jones L.-M."/>
            <person name="Kaerst U."/>
            <person name="Kreft J."/>
            <person name="Kuhn M."/>
            <person name="Kunst F."/>
            <person name="Kurapkat G."/>
            <person name="Madueno E."/>
            <person name="Maitournam A."/>
            <person name="Mata Vicente J."/>
            <person name="Ng E."/>
            <person name="Nedjari H."/>
            <person name="Nordsiek G."/>
            <person name="Novella S."/>
            <person name="de Pablos B."/>
            <person name="Perez-Diaz J.-C."/>
            <person name="Purcell R."/>
            <person name="Remmel B."/>
            <person name="Rose M."/>
            <person name="Schlueter T."/>
            <person name="Simoes N."/>
            <person name="Tierrez A."/>
            <person name="Vazquez-Boland J.-A."/>
            <person name="Voss H."/>
            <person name="Wehland J."/>
            <person name="Cossart P."/>
        </authorList>
    </citation>
    <scope>NUCLEOTIDE SEQUENCE [LARGE SCALE GENOMIC DNA]</scope>
    <source>
        <strain>ATCC BAA-679 / EGD-e</strain>
    </source>
</reference>
<accession>Q8Y651</accession>
<gene>
    <name type="primary">mntB</name>
    <name type="ordered locus">lmo1849</name>
</gene>
<proteinExistence type="inferred from homology"/>
<name>MNTB_LISMO</name>
<protein>
    <recommendedName>
        <fullName>Manganese transport system ATP-binding protein MntB</fullName>
    </recommendedName>
</protein>
<organism>
    <name type="scientific">Listeria monocytogenes serovar 1/2a (strain ATCC BAA-679 / EGD-e)</name>
    <dbReference type="NCBI Taxonomy" id="169963"/>
    <lineage>
        <taxon>Bacteria</taxon>
        <taxon>Bacillati</taxon>
        <taxon>Bacillota</taxon>
        <taxon>Bacilli</taxon>
        <taxon>Bacillales</taxon>
        <taxon>Listeriaceae</taxon>
        <taxon>Listeria</taxon>
    </lineage>
</organism>
<dbReference type="EMBL" id="AL591981">
    <property type="protein sequence ID" value="CAC99927.1"/>
    <property type="molecule type" value="Genomic_DNA"/>
</dbReference>
<dbReference type="PIR" id="AI1305">
    <property type="entry name" value="AI1305"/>
</dbReference>
<dbReference type="RefSeq" id="NP_465374.1">
    <property type="nucleotide sequence ID" value="NC_003210.1"/>
</dbReference>
<dbReference type="RefSeq" id="WP_003733074.1">
    <property type="nucleotide sequence ID" value="NZ_CP149495.1"/>
</dbReference>
<dbReference type="SMR" id="Q8Y651"/>
<dbReference type="STRING" id="169963.gene:17594534"/>
<dbReference type="PaxDb" id="169963-lmo1849"/>
<dbReference type="EnsemblBacteria" id="CAC99927">
    <property type="protein sequence ID" value="CAC99927"/>
    <property type="gene ID" value="CAC99927"/>
</dbReference>
<dbReference type="GeneID" id="985851"/>
<dbReference type="KEGG" id="lmo:lmo1849"/>
<dbReference type="PATRIC" id="fig|169963.11.peg.1894"/>
<dbReference type="eggNOG" id="COG1121">
    <property type="taxonomic scope" value="Bacteria"/>
</dbReference>
<dbReference type="HOGENOM" id="CLU_000604_1_11_9"/>
<dbReference type="OrthoDB" id="9806726at2"/>
<dbReference type="PhylomeDB" id="Q8Y651"/>
<dbReference type="BioCyc" id="LMON169963:LMO1849-MONOMER"/>
<dbReference type="Proteomes" id="UP000000817">
    <property type="component" value="Chromosome"/>
</dbReference>
<dbReference type="GO" id="GO:0043190">
    <property type="term" value="C:ATP-binding cassette (ABC) transporter complex"/>
    <property type="evidence" value="ECO:0000318"/>
    <property type="project" value="GO_Central"/>
</dbReference>
<dbReference type="GO" id="GO:0005524">
    <property type="term" value="F:ATP binding"/>
    <property type="evidence" value="ECO:0007669"/>
    <property type="project" value="UniProtKB-KW"/>
</dbReference>
<dbReference type="GO" id="GO:0016887">
    <property type="term" value="F:ATP hydrolysis activity"/>
    <property type="evidence" value="ECO:0007669"/>
    <property type="project" value="InterPro"/>
</dbReference>
<dbReference type="GO" id="GO:0042626">
    <property type="term" value="F:ATPase-coupled transmembrane transporter activity"/>
    <property type="evidence" value="ECO:0000318"/>
    <property type="project" value="GO_Central"/>
</dbReference>
<dbReference type="CDD" id="cd03235">
    <property type="entry name" value="ABC_Metallic_Cations"/>
    <property type="match status" value="1"/>
</dbReference>
<dbReference type="FunFam" id="3.40.50.300:FF:000134">
    <property type="entry name" value="Iron-enterobactin ABC transporter ATP-binding protein"/>
    <property type="match status" value="1"/>
</dbReference>
<dbReference type="Gene3D" id="3.40.50.300">
    <property type="entry name" value="P-loop containing nucleotide triphosphate hydrolases"/>
    <property type="match status" value="1"/>
</dbReference>
<dbReference type="InterPro" id="IPR003593">
    <property type="entry name" value="AAA+_ATPase"/>
</dbReference>
<dbReference type="InterPro" id="IPR003439">
    <property type="entry name" value="ABC_transporter-like_ATP-bd"/>
</dbReference>
<dbReference type="InterPro" id="IPR017871">
    <property type="entry name" value="ABC_transporter-like_CS"/>
</dbReference>
<dbReference type="InterPro" id="IPR050153">
    <property type="entry name" value="Metal_Ion_Import_ABC"/>
</dbReference>
<dbReference type="InterPro" id="IPR027417">
    <property type="entry name" value="P-loop_NTPase"/>
</dbReference>
<dbReference type="PANTHER" id="PTHR42734:SF5">
    <property type="entry name" value="IRON TRANSPORT SYSTEM ATP-BINDING PROTEIN HI_0361-RELATED"/>
    <property type="match status" value="1"/>
</dbReference>
<dbReference type="PANTHER" id="PTHR42734">
    <property type="entry name" value="METAL TRANSPORT SYSTEM ATP-BINDING PROTEIN TM_0124-RELATED"/>
    <property type="match status" value="1"/>
</dbReference>
<dbReference type="Pfam" id="PF00005">
    <property type="entry name" value="ABC_tran"/>
    <property type="match status" value="1"/>
</dbReference>
<dbReference type="SMART" id="SM00382">
    <property type="entry name" value="AAA"/>
    <property type="match status" value="1"/>
</dbReference>
<dbReference type="SUPFAM" id="SSF52540">
    <property type="entry name" value="P-loop containing nucleoside triphosphate hydrolases"/>
    <property type="match status" value="1"/>
</dbReference>
<dbReference type="PROSITE" id="PS00211">
    <property type="entry name" value="ABC_TRANSPORTER_1"/>
    <property type="match status" value="1"/>
</dbReference>
<dbReference type="PROSITE" id="PS50893">
    <property type="entry name" value="ABC_TRANSPORTER_2"/>
    <property type="match status" value="1"/>
</dbReference>
<feature type="chain" id="PRO_0000092526" description="Manganese transport system ATP-binding protein MntB">
    <location>
        <begin position="1"/>
        <end position="240"/>
    </location>
</feature>
<feature type="domain" description="ABC transporter" evidence="2">
    <location>
        <begin position="1"/>
        <end position="233"/>
    </location>
</feature>
<feature type="binding site" evidence="2">
    <location>
        <begin position="33"/>
        <end position="40"/>
    </location>
    <ligand>
        <name>ATP</name>
        <dbReference type="ChEBI" id="CHEBI:30616"/>
    </ligand>
</feature>
<comment type="function">
    <text evidence="1">This protein is probably a component of a manganese permease, a binding protein-dependent, ATP-driven transport system. Probably responsible for energy coupling to the transport system (By similarity).</text>
</comment>
<comment type="subcellular location">
    <subcellularLocation>
        <location evidence="3">Cell membrane</location>
        <topology evidence="3">Peripheral membrane protein</topology>
    </subcellularLocation>
</comment>
<comment type="similarity">
    <text evidence="3">Belongs to the ABC transporter superfamily.</text>
</comment>
<keyword id="KW-0067">ATP-binding</keyword>
<keyword id="KW-1003">Cell membrane</keyword>
<keyword id="KW-0472">Membrane</keyword>
<keyword id="KW-0547">Nucleotide-binding</keyword>
<keyword id="KW-1185">Reference proteome</keyword>
<keyword id="KW-0813">Transport</keyword>